<accession>B7NNG2</accession>
<reference key="1">
    <citation type="journal article" date="2009" name="PLoS Genet.">
        <title>Organised genome dynamics in the Escherichia coli species results in highly diverse adaptive paths.</title>
        <authorList>
            <person name="Touchon M."/>
            <person name="Hoede C."/>
            <person name="Tenaillon O."/>
            <person name="Barbe V."/>
            <person name="Baeriswyl S."/>
            <person name="Bidet P."/>
            <person name="Bingen E."/>
            <person name="Bonacorsi S."/>
            <person name="Bouchier C."/>
            <person name="Bouvet O."/>
            <person name="Calteau A."/>
            <person name="Chiapello H."/>
            <person name="Clermont O."/>
            <person name="Cruveiller S."/>
            <person name="Danchin A."/>
            <person name="Diard M."/>
            <person name="Dossat C."/>
            <person name="Karoui M.E."/>
            <person name="Frapy E."/>
            <person name="Garry L."/>
            <person name="Ghigo J.M."/>
            <person name="Gilles A.M."/>
            <person name="Johnson J."/>
            <person name="Le Bouguenec C."/>
            <person name="Lescat M."/>
            <person name="Mangenot S."/>
            <person name="Martinez-Jehanne V."/>
            <person name="Matic I."/>
            <person name="Nassif X."/>
            <person name="Oztas S."/>
            <person name="Petit M.A."/>
            <person name="Pichon C."/>
            <person name="Rouy Z."/>
            <person name="Ruf C.S."/>
            <person name="Schneider D."/>
            <person name="Tourret J."/>
            <person name="Vacherie B."/>
            <person name="Vallenet D."/>
            <person name="Medigue C."/>
            <person name="Rocha E.P.C."/>
            <person name="Denamur E."/>
        </authorList>
    </citation>
    <scope>NUCLEOTIDE SEQUENCE [LARGE SCALE GENOMIC DNA]</scope>
    <source>
        <strain>IAI39 / ExPEC</strain>
    </source>
</reference>
<sequence length="428" mass="45436">MKTSLFKSLYFQVLTAIAIGILLGHFYPEIGEQMKPLGDGFVKLIKMIIAPVIFCTVVTGIAGMESMKAVGRTGAVALLYFEIVSTIALIIGLIIVNVVQPGAGMNVDPATLDAKAVAVYADQAKDQGIVAFIMDVIPASVIGAFASGNILQVLLFAVLFGFALHRLGSKGQLIFNVIESFSQVIFGIINMIMRLAPIGAFGAMAFTIGKYGVGTLVQLGQLIICFYITCILFVVLVLGSIAKATGFSIFKFIRYIREELLIVLGTSSSESALPRMLDKMEKLGCRKSVVGLVIPTGYSFNLDGTSIYLTMAAVFIAQATNSQMDIVHQITLLIVLLLSSKGAAGVTGSGFIVLAATLSAVGHLPVAGLALILGIDRFMSEARALTNLVGNGVATIVVAKWVKELDHKKLDDVLNNRAPDGKTHELSS</sequence>
<name>DCTA_ECO7I</name>
<comment type="function">
    <text evidence="1">Responsible for the transport of dicarboxylates such as succinate, fumarate, and malate from the periplasm across the membrane.</text>
</comment>
<comment type="subcellular location">
    <subcellularLocation>
        <location evidence="1">Cell inner membrane</location>
        <topology evidence="1">Multi-pass membrane protein</topology>
    </subcellularLocation>
</comment>
<comment type="similarity">
    <text evidence="1">Belongs to the dicarboxylate/amino acid:cation symporter (DAACS) (TC 2.A.23) family.</text>
</comment>
<protein>
    <recommendedName>
        <fullName evidence="1">C4-dicarboxylate transport protein</fullName>
    </recommendedName>
</protein>
<organism>
    <name type="scientific">Escherichia coli O7:K1 (strain IAI39 / ExPEC)</name>
    <dbReference type="NCBI Taxonomy" id="585057"/>
    <lineage>
        <taxon>Bacteria</taxon>
        <taxon>Pseudomonadati</taxon>
        <taxon>Pseudomonadota</taxon>
        <taxon>Gammaproteobacteria</taxon>
        <taxon>Enterobacterales</taxon>
        <taxon>Enterobacteriaceae</taxon>
        <taxon>Escherichia</taxon>
    </lineage>
</organism>
<evidence type="ECO:0000255" key="1">
    <source>
        <dbReference type="HAMAP-Rule" id="MF_01300"/>
    </source>
</evidence>
<feature type="chain" id="PRO_1000140452" description="C4-dicarboxylate transport protein">
    <location>
        <begin position="1"/>
        <end position="428"/>
    </location>
</feature>
<feature type="transmembrane region" description="Helical" evidence="1">
    <location>
        <begin position="8"/>
        <end position="28"/>
    </location>
</feature>
<feature type="transmembrane region" description="Helical" evidence="1">
    <location>
        <begin position="44"/>
        <end position="64"/>
    </location>
</feature>
<feature type="transmembrane region" description="Helical" evidence="1">
    <location>
        <begin position="76"/>
        <end position="96"/>
    </location>
</feature>
<feature type="transmembrane region" description="Helical" evidence="1">
    <location>
        <begin position="142"/>
        <end position="162"/>
    </location>
</feature>
<feature type="transmembrane region" description="Helical" evidence="1">
    <location>
        <begin position="184"/>
        <end position="204"/>
    </location>
</feature>
<feature type="transmembrane region" description="Helical" evidence="1">
    <location>
        <begin position="222"/>
        <end position="242"/>
    </location>
</feature>
<feature type="transmembrane region" description="Helical" evidence="1">
    <location>
        <begin position="326"/>
        <end position="346"/>
    </location>
</feature>
<feature type="transmembrane region" description="Helical" evidence="1">
    <location>
        <begin position="352"/>
        <end position="372"/>
    </location>
</feature>
<gene>
    <name evidence="1" type="primary">dctA</name>
    <name type="ordered locus">ECIAI39_4031</name>
</gene>
<proteinExistence type="inferred from homology"/>
<keyword id="KW-0997">Cell inner membrane</keyword>
<keyword id="KW-1003">Cell membrane</keyword>
<keyword id="KW-0472">Membrane</keyword>
<keyword id="KW-0769">Symport</keyword>
<keyword id="KW-0812">Transmembrane</keyword>
<keyword id="KW-1133">Transmembrane helix</keyword>
<keyword id="KW-0813">Transport</keyword>
<dbReference type="EMBL" id="CU928164">
    <property type="protein sequence ID" value="CAR20142.1"/>
    <property type="molecule type" value="Genomic_DNA"/>
</dbReference>
<dbReference type="RefSeq" id="WP_000858214.1">
    <property type="nucleotide sequence ID" value="NC_011750.1"/>
</dbReference>
<dbReference type="RefSeq" id="YP_002409922.1">
    <property type="nucleotide sequence ID" value="NC_011750.1"/>
</dbReference>
<dbReference type="SMR" id="B7NNG2"/>
<dbReference type="STRING" id="585057.ECIAI39_4031"/>
<dbReference type="GeneID" id="93778248"/>
<dbReference type="KEGG" id="ect:ECIAI39_4031"/>
<dbReference type="PATRIC" id="fig|585057.6.peg.4172"/>
<dbReference type="HOGENOM" id="CLU_019375_7_0_6"/>
<dbReference type="Proteomes" id="UP000000749">
    <property type="component" value="Chromosome"/>
</dbReference>
<dbReference type="GO" id="GO:0005886">
    <property type="term" value="C:plasma membrane"/>
    <property type="evidence" value="ECO:0007669"/>
    <property type="project" value="UniProtKB-SubCell"/>
</dbReference>
<dbReference type="GO" id="GO:0015138">
    <property type="term" value="F:fumarate transmembrane transporter activity"/>
    <property type="evidence" value="ECO:0007669"/>
    <property type="project" value="TreeGrafter"/>
</dbReference>
<dbReference type="GO" id="GO:0015366">
    <property type="term" value="F:malate:proton symporter activity"/>
    <property type="evidence" value="ECO:0007669"/>
    <property type="project" value="TreeGrafter"/>
</dbReference>
<dbReference type="GO" id="GO:0015141">
    <property type="term" value="F:succinate transmembrane transporter activity"/>
    <property type="evidence" value="ECO:0007669"/>
    <property type="project" value="TreeGrafter"/>
</dbReference>
<dbReference type="GO" id="GO:0070778">
    <property type="term" value="P:L-aspartate transmembrane transport"/>
    <property type="evidence" value="ECO:0007669"/>
    <property type="project" value="TreeGrafter"/>
</dbReference>
<dbReference type="FunFam" id="1.10.3860.10:FF:000001">
    <property type="entry name" value="C4-dicarboxylate transport protein"/>
    <property type="match status" value="1"/>
</dbReference>
<dbReference type="Gene3D" id="1.10.3860.10">
    <property type="entry name" value="Sodium:dicarboxylate symporter"/>
    <property type="match status" value="1"/>
</dbReference>
<dbReference type="HAMAP" id="MF_01300">
    <property type="entry name" value="C4_dicarb_transport"/>
    <property type="match status" value="1"/>
</dbReference>
<dbReference type="InterPro" id="IPR023954">
    <property type="entry name" value="C4_dicarb_transport"/>
</dbReference>
<dbReference type="InterPro" id="IPR001991">
    <property type="entry name" value="Na-dicarboxylate_symporter"/>
</dbReference>
<dbReference type="InterPro" id="IPR018107">
    <property type="entry name" value="Na-dicarboxylate_symporter_CS"/>
</dbReference>
<dbReference type="InterPro" id="IPR036458">
    <property type="entry name" value="Na:dicarbo_symporter_sf"/>
</dbReference>
<dbReference type="NCBIfam" id="NF002461">
    <property type="entry name" value="PRK01663.1"/>
    <property type="match status" value="1"/>
</dbReference>
<dbReference type="NCBIfam" id="NF009587">
    <property type="entry name" value="PRK13027.1"/>
    <property type="match status" value="1"/>
</dbReference>
<dbReference type="PANTHER" id="PTHR42865:SF1">
    <property type="entry name" value="AEROBIC C4-DICARBOXYLATE TRANSPORT PROTEIN"/>
    <property type="match status" value="1"/>
</dbReference>
<dbReference type="PANTHER" id="PTHR42865">
    <property type="entry name" value="PROTON/GLUTAMATE-ASPARTATE SYMPORTER"/>
    <property type="match status" value="1"/>
</dbReference>
<dbReference type="Pfam" id="PF00375">
    <property type="entry name" value="SDF"/>
    <property type="match status" value="1"/>
</dbReference>
<dbReference type="PRINTS" id="PR00173">
    <property type="entry name" value="EDTRNSPORT"/>
</dbReference>
<dbReference type="SUPFAM" id="SSF118215">
    <property type="entry name" value="Proton glutamate symport protein"/>
    <property type="match status" value="1"/>
</dbReference>
<dbReference type="PROSITE" id="PS00713">
    <property type="entry name" value="NA_DICARBOXYL_SYMP_1"/>
    <property type="match status" value="1"/>
</dbReference>
<dbReference type="PROSITE" id="PS00714">
    <property type="entry name" value="NA_DICARBOXYL_SYMP_2"/>
    <property type="match status" value="1"/>
</dbReference>